<evidence type="ECO:0000255" key="1"/>
<evidence type="ECO:0000269" key="2">
    <source>
    </source>
</evidence>
<evidence type="ECO:0000305" key="3"/>
<dbReference type="EMBL" id="AY061646">
    <property type="protein sequence ID" value="AAL29686.1"/>
    <property type="molecule type" value="Genomic_DNA"/>
</dbReference>
<dbReference type="EMBL" id="FN869568">
    <property type="protein sequence ID" value="CBV44160.1"/>
    <property type="molecule type" value="Genomic_DNA"/>
</dbReference>
<dbReference type="RefSeq" id="WP_013334030.1">
    <property type="nucleotide sequence ID" value="NC_014532.2"/>
</dbReference>
<dbReference type="SMR" id="E1VBK3"/>
<dbReference type="STRING" id="768066.HELO_4276"/>
<dbReference type="TCDB" id="2.A.56.1.11">
    <property type="family name" value="the tripartite atp-independent periplasmic transporter (trap-t) family"/>
</dbReference>
<dbReference type="GeneID" id="91011726"/>
<dbReference type="KEGG" id="hel:HELO_4276"/>
<dbReference type="eggNOG" id="COG1593">
    <property type="taxonomic scope" value="Bacteria"/>
</dbReference>
<dbReference type="HOGENOM" id="CLU_019824_4_1_6"/>
<dbReference type="OrthoDB" id="9796052at2"/>
<dbReference type="Proteomes" id="UP000008707">
    <property type="component" value="Chromosome"/>
</dbReference>
<dbReference type="GO" id="GO:0005886">
    <property type="term" value="C:plasma membrane"/>
    <property type="evidence" value="ECO:0007669"/>
    <property type="project" value="UniProtKB-SubCell"/>
</dbReference>
<dbReference type="GO" id="GO:0022857">
    <property type="term" value="F:transmembrane transporter activity"/>
    <property type="evidence" value="ECO:0007669"/>
    <property type="project" value="TreeGrafter"/>
</dbReference>
<dbReference type="InterPro" id="IPR010656">
    <property type="entry name" value="DctM"/>
</dbReference>
<dbReference type="InterPro" id="IPR004681">
    <property type="entry name" value="TRAP_DctM"/>
</dbReference>
<dbReference type="NCBIfam" id="TIGR00786">
    <property type="entry name" value="dctM"/>
    <property type="match status" value="1"/>
</dbReference>
<dbReference type="PANTHER" id="PTHR33362">
    <property type="entry name" value="SIALIC ACID TRAP TRANSPORTER PERMEASE PROTEIN SIAT-RELATED"/>
    <property type="match status" value="1"/>
</dbReference>
<dbReference type="Pfam" id="PF06808">
    <property type="entry name" value="DctM"/>
    <property type="match status" value="1"/>
</dbReference>
<dbReference type="PIRSF" id="PIRSF006066">
    <property type="entry name" value="HI0050"/>
    <property type="match status" value="1"/>
</dbReference>
<comment type="function">
    <text evidence="2">Part of the tripartite ATP-independent periplasmic (TRAP) transport system TeaABC involved in the uptake of ectoine and hydroxyectoine in response to osmotic upshock. Probably functions as a recovery system for synthesized ectoine that leaks out of the cell.</text>
</comment>
<comment type="subunit">
    <text evidence="2">The complex comprises the extracytoplasmic solute receptor protein TeaA, and the two transmembrane proteins TeaB and TeaC.</text>
</comment>
<comment type="subcellular location">
    <subcellularLocation>
        <location evidence="3">Cell inner membrane</location>
        <topology evidence="3">Multi-pass membrane protein</topology>
    </subcellularLocation>
</comment>
<comment type="disruption phenotype">
    <text evidence="2">Deletion abolishes accumulation of ectoine from the medium.</text>
</comment>
<comment type="similarity">
    <text evidence="3">Belongs to the TRAP transporter large permease family.</text>
</comment>
<gene>
    <name type="primary">teaC</name>
    <name type="ordered locus">HELO_4276</name>
</gene>
<name>TEAC_HALED</name>
<keyword id="KW-0997">Cell inner membrane</keyword>
<keyword id="KW-1003">Cell membrane</keyword>
<keyword id="KW-0472">Membrane</keyword>
<keyword id="KW-0812">Transmembrane</keyword>
<keyword id="KW-1133">Transmembrane helix</keyword>
<keyword id="KW-0813">Transport</keyword>
<proteinExistence type="evidence at protein level"/>
<feature type="chain" id="PRO_0000428829" description="Ectoine TRAP transporter large permease protein TeaC">
    <location>
        <begin position="1"/>
        <end position="427"/>
    </location>
</feature>
<feature type="transmembrane region" description="Helical" evidence="1">
    <location>
        <begin position="13"/>
        <end position="35"/>
    </location>
</feature>
<feature type="transmembrane region" description="Helical" evidence="1">
    <location>
        <begin position="49"/>
        <end position="69"/>
    </location>
</feature>
<feature type="transmembrane region" description="Helical" evidence="1">
    <location>
        <begin position="79"/>
        <end position="99"/>
    </location>
</feature>
<feature type="transmembrane region" description="Helical" evidence="1">
    <location>
        <begin position="103"/>
        <end position="123"/>
    </location>
</feature>
<feature type="transmembrane region" description="Helical" evidence="1">
    <location>
        <begin position="147"/>
        <end position="167"/>
    </location>
</feature>
<feature type="transmembrane region" description="Helical" evidence="1">
    <location>
        <begin position="172"/>
        <end position="192"/>
    </location>
</feature>
<feature type="transmembrane region" description="Helical" evidence="1">
    <location>
        <begin position="216"/>
        <end position="236"/>
    </location>
</feature>
<feature type="transmembrane region" description="Helical" evidence="1">
    <location>
        <begin position="237"/>
        <end position="257"/>
    </location>
</feature>
<feature type="transmembrane region" description="Helical" evidence="1">
    <location>
        <begin position="273"/>
        <end position="293"/>
    </location>
</feature>
<feature type="transmembrane region" description="Helical" evidence="1">
    <location>
        <begin position="320"/>
        <end position="340"/>
    </location>
</feature>
<feature type="transmembrane region" description="Helical" evidence="1">
    <location>
        <begin position="356"/>
        <end position="376"/>
    </location>
</feature>
<feature type="transmembrane region" description="Helical" evidence="1">
    <location>
        <begin position="400"/>
        <end position="420"/>
    </location>
</feature>
<sequence>MTTIMVATMIGLLLLGFPMMIPLATASIIGFFMMFGGLGQMETLIQQLMAGIRPASLIAVPMFILAADIMTRGQSANRLINMVMAFIGHIKGGLAVSTAASCTLFGAVSGSTQATVVAVGSPLRPRMLKAGYSDSFSLALIINSSDIAFLIPPSIGMIIYGIISGTSIGELFIAGIGPGLMILVMFAIYCVIYAIVRGVPTEPKASWGERFSAVRLALWPLGFPVIIIGGIYGGIFSPTEAAAACVLYAVLLEFVVFRSLKISDIYAIAKSTGLITAVVFILVAVGNSFSWIISFAQIPQAILEAVGINEAGPTGVLIAICVAFFVACMFVDPIVVILVLTPVFAPAIEATGLDPVLVGILITLQVAIGSATPPFGCDIFTAIAIFKRPYLDVIKGTPPFIFMLVLAAALLILFPQIALFLRDLAFR</sequence>
<organism>
    <name type="scientific">Halomonas elongata (strain ATCC 33173 / DSM 2581 / NBRC 15536 / NCIMB 2198 / 1H9)</name>
    <dbReference type="NCBI Taxonomy" id="768066"/>
    <lineage>
        <taxon>Bacteria</taxon>
        <taxon>Pseudomonadati</taxon>
        <taxon>Pseudomonadota</taxon>
        <taxon>Gammaproteobacteria</taxon>
        <taxon>Oceanospirillales</taxon>
        <taxon>Halomonadaceae</taxon>
        <taxon>Halomonas</taxon>
    </lineage>
</organism>
<reference key="1">
    <citation type="journal article" date="2002" name="J. Bacteriol.">
        <title>New type of osmoregulated solute transporter identified in halophilic members of the bacteria domain: TRAP transporter TeaABC mediates uptake of ectoine and hydroxyectoine in Halomonas elongata DSM 2581(T).</title>
        <authorList>
            <person name="Grammann K."/>
            <person name="Volke A."/>
            <person name="Kunte H.J."/>
        </authorList>
    </citation>
    <scope>NUCLEOTIDE SEQUENCE [GENOMIC DNA]</scope>
    <scope>FUNCTION</scope>
    <scope>SUBUNIT</scope>
    <scope>DISRUPTION PHENOTYPE</scope>
    <scope>GENE NAME</scope>
    <source>
        <strain>ATCC 33173 / DSM 2581 / NBRC 15536 / NCIMB 2198 / 1H9</strain>
    </source>
</reference>
<reference key="2">
    <citation type="journal article" date="2011" name="Environ. Microbiol.">
        <title>A blueprint of ectoine metabolism from the genome of the industrial producer Halomonas elongata DSM 2581(T).</title>
        <authorList>
            <person name="Schwibbert K."/>
            <person name="Marin-Sanguino A."/>
            <person name="Bagyan I."/>
            <person name="Heidrich G."/>
            <person name="Lentzen G."/>
            <person name="Seitz H."/>
            <person name="Rampp M."/>
            <person name="Schuster S.C."/>
            <person name="Klenk H.P."/>
            <person name="Pfeiffer F."/>
            <person name="Oesterhelt D."/>
            <person name="Kunte H.J."/>
        </authorList>
    </citation>
    <scope>NUCLEOTIDE SEQUENCE [LARGE SCALE GENOMIC DNA]</scope>
    <source>
        <strain>ATCC 33173 / DSM 2581 / NBRC 15536 / NCIMB 2198 / 1H9</strain>
    </source>
</reference>
<protein>
    <recommendedName>
        <fullName>Ectoine TRAP transporter large permease protein TeaC</fullName>
    </recommendedName>
</protein>
<accession>E1VBK3</accession>
<accession>Q8VPB1</accession>